<protein>
    <recommendedName>
        <fullName evidence="1">Ribonuclease 3</fullName>
        <ecNumber evidence="1">3.1.26.3</ecNumber>
    </recommendedName>
    <alternativeName>
        <fullName evidence="1">Ribonuclease III</fullName>
        <shortName evidence="1">RNase III</shortName>
    </alternativeName>
</protein>
<evidence type="ECO:0000255" key="1">
    <source>
        <dbReference type="HAMAP-Rule" id="MF_00104"/>
    </source>
</evidence>
<accession>A1JKK3</accession>
<keyword id="KW-0963">Cytoplasm</keyword>
<keyword id="KW-0255">Endonuclease</keyword>
<keyword id="KW-0378">Hydrolase</keyword>
<keyword id="KW-0460">Magnesium</keyword>
<keyword id="KW-0479">Metal-binding</keyword>
<keyword id="KW-0507">mRNA processing</keyword>
<keyword id="KW-0540">Nuclease</keyword>
<keyword id="KW-0694">RNA-binding</keyword>
<keyword id="KW-0698">rRNA processing</keyword>
<keyword id="KW-0699">rRNA-binding</keyword>
<keyword id="KW-0819">tRNA processing</keyword>
<comment type="function">
    <text evidence="1">Digests double-stranded RNA. Involved in the processing of primary rRNA transcript to yield the immediate precursors to the large and small rRNAs (23S and 16S). Processes some mRNAs, and tRNAs when they are encoded in the rRNA operon. Processes pre-crRNA and tracrRNA of type II CRISPR loci if present in the organism.</text>
</comment>
<comment type="catalytic activity">
    <reaction evidence="1">
        <text>Endonucleolytic cleavage to 5'-phosphomonoester.</text>
        <dbReference type="EC" id="3.1.26.3"/>
    </reaction>
</comment>
<comment type="cofactor">
    <cofactor evidence="1">
        <name>Mg(2+)</name>
        <dbReference type="ChEBI" id="CHEBI:18420"/>
    </cofactor>
</comment>
<comment type="subunit">
    <text evidence="1">Homodimer.</text>
</comment>
<comment type="subcellular location">
    <subcellularLocation>
        <location evidence="1">Cytoplasm</location>
    </subcellularLocation>
</comment>
<comment type="similarity">
    <text evidence="1">Belongs to the ribonuclease III family.</text>
</comment>
<sequence length="226" mass="25663">MNPIVINRLQRKLGYTFQQQELLLQALTHRSASSKHNERLEFLGDSILSFVIANELYRRFPRVDEGDMSRMRATLVRGNTLAEMAREFDLGECLRLGPGELKSGGFRRESILADTVEALIGGIFLDSDIHTIERLILAWYHSRLEEISPGDKQKDPKTRLQEYLQGRHLPLPSYLVVQVRGEAHDQEFTIHCQVSGLNEPVIGTGSSRRKAEQAAAEQALKQLELE</sequence>
<reference key="1">
    <citation type="journal article" date="2006" name="PLoS Genet.">
        <title>The complete genome sequence and comparative genome analysis of the high pathogenicity Yersinia enterocolitica strain 8081.</title>
        <authorList>
            <person name="Thomson N.R."/>
            <person name="Howard S."/>
            <person name="Wren B.W."/>
            <person name="Holden M.T.G."/>
            <person name="Crossman L."/>
            <person name="Challis G.L."/>
            <person name="Churcher C."/>
            <person name="Mungall K."/>
            <person name="Brooks K."/>
            <person name="Chillingworth T."/>
            <person name="Feltwell T."/>
            <person name="Abdellah Z."/>
            <person name="Hauser H."/>
            <person name="Jagels K."/>
            <person name="Maddison M."/>
            <person name="Moule S."/>
            <person name="Sanders M."/>
            <person name="Whitehead S."/>
            <person name="Quail M.A."/>
            <person name="Dougan G."/>
            <person name="Parkhill J."/>
            <person name="Prentice M.B."/>
        </authorList>
    </citation>
    <scope>NUCLEOTIDE SEQUENCE [LARGE SCALE GENOMIC DNA]</scope>
    <source>
        <strain>NCTC 13174 / 8081</strain>
    </source>
</reference>
<name>RNC_YERE8</name>
<feature type="chain" id="PRO_1000075850" description="Ribonuclease 3">
    <location>
        <begin position="1"/>
        <end position="226"/>
    </location>
</feature>
<feature type="domain" description="RNase III" evidence="1">
    <location>
        <begin position="6"/>
        <end position="128"/>
    </location>
</feature>
<feature type="domain" description="DRBM" evidence="1">
    <location>
        <begin position="155"/>
        <end position="225"/>
    </location>
</feature>
<feature type="active site" evidence="1">
    <location>
        <position position="45"/>
    </location>
</feature>
<feature type="active site" evidence="1">
    <location>
        <position position="117"/>
    </location>
</feature>
<feature type="binding site" evidence="1">
    <location>
        <position position="41"/>
    </location>
    <ligand>
        <name>Mg(2+)</name>
        <dbReference type="ChEBI" id="CHEBI:18420"/>
    </ligand>
</feature>
<feature type="binding site" evidence="1">
    <location>
        <position position="114"/>
    </location>
    <ligand>
        <name>Mg(2+)</name>
        <dbReference type="ChEBI" id="CHEBI:18420"/>
    </ligand>
</feature>
<feature type="binding site" evidence="1">
    <location>
        <position position="117"/>
    </location>
    <ligand>
        <name>Mg(2+)</name>
        <dbReference type="ChEBI" id="CHEBI:18420"/>
    </ligand>
</feature>
<gene>
    <name evidence="1" type="primary">rnc</name>
    <name type="ordered locus">YE1017</name>
</gene>
<proteinExistence type="inferred from homology"/>
<dbReference type="EC" id="3.1.26.3" evidence="1"/>
<dbReference type="EMBL" id="AM286415">
    <property type="protein sequence ID" value="CAL11115.1"/>
    <property type="molecule type" value="Genomic_DNA"/>
</dbReference>
<dbReference type="RefSeq" id="WP_005172746.1">
    <property type="nucleotide sequence ID" value="NC_008800.1"/>
</dbReference>
<dbReference type="RefSeq" id="YP_001005350.1">
    <property type="nucleotide sequence ID" value="NC_008800.1"/>
</dbReference>
<dbReference type="SMR" id="A1JKK3"/>
<dbReference type="GeneID" id="93969920"/>
<dbReference type="KEGG" id="yen:YE1017"/>
<dbReference type="PATRIC" id="fig|393305.7.peg.1113"/>
<dbReference type="eggNOG" id="COG0571">
    <property type="taxonomic scope" value="Bacteria"/>
</dbReference>
<dbReference type="HOGENOM" id="CLU_000907_1_1_6"/>
<dbReference type="OrthoDB" id="9805026at2"/>
<dbReference type="Proteomes" id="UP000000642">
    <property type="component" value="Chromosome"/>
</dbReference>
<dbReference type="GO" id="GO:0005737">
    <property type="term" value="C:cytoplasm"/>
    <property type="evidence" value="ECO:0007669"/>
    <property type="project" value="UniProtKB-SubCell"/>
</dbReference>
<dbReference type="GO" id="GO:0003725">
    <property type="term" value="F:double-stranded RNA binding"/>
    <property type="evidence" value="ECO:0007669"/>
    <property type="project" value="TreeGrafter"/>
</dbReference>
<dbReference type="GO" id="GO:0046872">
    <property type="term" value="F:metal ion binding"/>
    <property type="evidence" value="ECO:0007669"/>
    <property type="project" value="UniProtKB-KW"/>
</dbReference>
<dbReference type="GO" id="GO:0004525">
    <property type="term" value="F:ribonuclease III activity"/>
    <property type="evidence" value="ECO:0007669"/>
    <property type="project" value="UniProtKB-UniRule"/>
</dbReference>
<dbReference type="GO" id="GO:0019843">
    <property type="term" value="F:rRNA binding"/>
    <property type="evidence" value="ECO:0007669"/>
    <property type="project" value="UniProtKB-KW"/>
</dbReference>
<dbReference type="GO" id="GO:0006397">
    <property type="term" value="P:mRNA processing"/>
    <property type="evidence" value="ECO:0007669"/>
    <property type="project" value="UniProtKB-UniRule"/>
</dbReference>
<dbReference type="GO" id="GO:0010468">
    <property type="term" value="P:regulation of gene expression"/>
    <property type="evidence" value="ECO:0007669"/>
    <property type="project" value="TreeGrafter"/>
</dbReference>
<dbReference type="GO" id="GO:0006364">
    <property type="term" value="P:rRNA processing"/>
    <property type="evidence" value="ECO:0007669"/>
    <property type="project" value="UniProtKB-UniRule"/>
</dbReference>
<dbReference type="GO" id="GO:0008033">
    <property type="term" value="P:tRNA processing"/>
    <property type="evidence" value="ECO:0007669"/>
    <property type="project" value="UniProtKB-KW"/>
</dbReference>
<dbReference type="CDD" id="cd10845">
    <property type="entry name" value="DSRM_RNAse_III_family"/>
    <property type="match status" value="1"/>
</dbReference>
<dbReference type="CDD" id="cd00593">
    <property type="entry name" value="RIBOc"/>
    <property type="match status" value="1"/>
</dbReference>
<dbReference type="FunFam" id="1.10.1520.10:FF:000001">
    <property type="entry name" value="Ribonuclease 3"/>
    <property type="match status" value="1"/>
</dbReference>
<dbReference type="FunFam" id="3.30.160.20:FF:000003">
    <property type="entry name" value="Ribonuclease 3"/>
    <property type="match status" value="1"/>
</dbReference>
<dbReference type="Gene3D" id="3.30.160.20">
    <property type="match status" value="1"/>
</dbReference>
<dbReference type="Gene3D" id="1.10.1520.10">
    <property type="entry name" value="Ribonuclease III domain"/>
    <property type="match status" value="1"/>
</dbReference>
<dbReference type="HAMAP" id="MF_00104">
    <property type="entry name" value="RNase_III"/>
    <property type="match status" value="1"/>
</dbReference>
<dbReference type="InterPro" id="IPR014720">
    <property type="entry name" value="dsRBD_dom"/>
</dbReference>
<dbReference type="InterPro" id="IPR011907">
    <property type="entry name" value="RNase_III"/>
</dbReference>
<dbReference type="InterPro" id="IPR000999">
    <property type="entry name" value="RNase_III_dom"/>
</dbReference>
<dbReference type="InterPro" id="IPR036389">
    <property type="entry name" value="RNase_III_sf"/>
</dbReference>
<dbReference type="NCBIfam" id="TIGR02191">
    <property type="entry name" value="RNaseIII"/>
    <property type="match status" value="1"/>
</dbReference>
<dbReference type="PANTHER" id="PTHR11207:SF0">
    <property type="entry name" value="RIBONUCLEASE 3"/>
    <property type="match status" value="1"/>
</dbReference>
<dbReference type="PANTHER" id="PTHR11207">
    <property type="entry name" value="RIBONUCLEASE III"/>
    <property type="match status" value="1"/>
</dbReference>
<dbReference type="Pfam" id="PF00035">
    <property type="entry name" value="dsrm"/>
    <property type="match status" value="1"/>
</dbReference>
<dbReference type="Pfam" id="PF14622">
    <property type="entry name" value="Ribonucleas_3_3"/>
    <property type="match status" value="1"/>
</dbReference>
<dbReference type="SMART" id="SM00358">
    <property type="entry name" value="DSRM"/>
    <property type="match status" value="1"/>
</dbReference>
<dbReference type="SMART" id="SM00535">
    <property type="entry name" value="RIBOc"/>
    <property type="match status" value="1"/>
</dbReference>
<dbReference type="SUPFAM" id="SSF54768">
    <property type="entry name" value="dsRNA-binding domain-like"/>
    <property type="match status" value="1"/>
</dbReference>
<dbReference type="SUPFAM" id="SSF69065">
    <property type="entry name" value="RNase III domain-like"/>
    <property type="match status" value="1"/>
</dbReference>
<dbReference type="PROSITE" id="PS50137">
    <property type="entry name" value="DS_RBD"/>
    <property type="match status" value="1"/>
</dbReference>
<dbReference type="PROSITE" id="PS00517">
    <property type="entry name" value="RNASE_3_1"/>
    <property type="match status" value="1"/>
</dbReference>
<dbReference type="PROSITE" id="PS50142">
    <property type="entry name" value="RNASE_3_2"/>
    <property type="match status" value="1"/>
</dbReference>
<organism>
    <name type="scientific">Yersinia enterocolitica serotype O:8 / biotype 1B (strain NCTC 13174 / 8081)</name>
    <dbReference type="NCBI Taxonomy" id="393305"/>
    <lineage>
        <taxon>Bacteria</taxon>
        <taxon>Pseudomonadati</taxon>
        <taxon>Pseudomonadota</taxon>
        <taxon>Gammaproteobacteria</taxon>
        <taxon>Enterobacterales</taxon>
        <taxon>Yersiniaceae</taxon>
        <taxon>Yersinia</taxon>
    </lineage>
</organism>